<gene>
    <name evidence="3" type="primary">ERN3</name>
    <name evidence="3" type="synonym">NFbB3</name>
    <name evidence="5" type="ordered locus">MTR_8g085960</name>
</gene>
<dbReference type="EMBL" id="EU038804">
    <property type="protein sequence ID" value="ABW06104.1"/>
    <property type="molecule type" value="mRNA"/>
</dbReference>
<dbReference type="EMBL" id="CM001224">
    <property type="protein sequence ID" value="AET04210.1"/>
    <property type="molecule type" value="Genomic_DNA"/>
</dbReference>
<dbReference type="RefSeq" id="XP_003629734.1">
    <property type="nucleotide sequence ID" value="XM_003629686.2"/>
</dbReference>
<dbReference type="SMR" id="A9Y0K9"/>
<dbReference type="STRING" id="3880.A9Y0K9"/>
<dbReference type="PaxDb" id="3880-AET04210"/>
<dbReference type="GeneID" id="11408318"/>
<dbReference type="KEGG" id="mtr:11408318"/>
<dbReference type="eggNOG" id="ENOG502RB9M">
    <property type="taxonomic scope" value="Eukaryota"/>
</dbReference>
<dbReference type="HOGENOM" id="CLU_056266_0_0_1"/>
<dbReference type="OMA" id="SKKIRMW"/>
<dbReference type="OrthoDB" id="773121at2759"/>
<dbReference type="Proteomes" id="UP000002051">
    <property type="component" value="Chromosome 8"/>
</dbReference>
<dbReference type="GO" id="GO:0005634">
    <property type="term" value="C:nucleus"/>
    <property type="evidence" value="ECO:0000314"/>
    <property type="project" value="UniProtKB"/>
</dbReference>
<dbReference type="GO" id="GO:0003700">
    <property type="term" value="F:DNA-binding transcription factor activity"/>
    <property type="evidence" value="ECO:0007669"/>
    <property type="project" value="InterPro"/>
</dbReference>
<dbReference type="GO" id="GO:0043565">
    <property type="term" value="F:sequence-specific DNA binding"/>
    <property type="evidence" value="ECO:0000314"/>
    <property type="project" value="UniProtKB"/>
</dbReference>
<dbReference type="GO" id="GO:0045892">
    <property type="term" value="P:negative regulation of DNA-templated transcription"/>
    <property type="evidence" value="ECO:0000314"/>
    <property type="project" value="UniProtKB"/>
</dbReference>
<dbReference type="GO" id="GO:0009877">
    <property type="term" value="P:nodulation"/>
    <property type="evidence" value="ECO:0000315"/>
    <property type="project" value="UniProtKB"/>
</dbReference>
<dbReference type="CDD" id="cd00018">
    <property type="entry name" value="AP2"/>
    <property type="match status" value="1"/>
</dbReference>
<dbReference type="FunFam" id="3.30.730.10:FF:000005">
    <property type="entry name" value="ethylene-responsive transcription factor RAP2-11"/>
    <property type="match status" value="1"/>
</dbReference>
<dbReference type="Gene3D" id="3.30.730.10">
    <property type="entry name" value="AP2/ERF domain"/>
    <property type="match status" value="1"/>
</dbReference>
<dbReference type="InterPro" id="IPR001471">
    <property type="entry name" value="AP2/ERF_dom"/>
</dbReference>
<dbReference type="InterPro" id="IPR036955">
    <property type="entry name" value="AP2/ERF_dom_sf"/>
</dbReference>
<dbReference type="InterPro" id="IPR050913">
    <property type="entry name" value="AP2/ERF_ERF_subfamily"/>
</dbReference>
<dbReference type="InterPro" id="IPR016177">
    <property type="entry name" value="DNA-bd_dom_sf"/>
</dbReference>
<dbReference type="PANTHER" id="PTHR31194:SF90">
    <property type="entry name" value="ETHYLENE-RESPONSIVE TRANSCRIPTION FACTOR RAP2-11"/>
    <property type="match status" value="1"/>
</dbReference>
<dbReference type="PANTHER" id="PTHR31194">
    <property type="entry name" value="SHN SHINE , DNA BINDING / TRANSCRIPTION FACTOR"/>
    <property type="match status" value="1"/>
</dbReference>
<dbReference type="Pfam" id="PF00847">
    <property type="entry name" value="AP2"/>
    <property type="match status" value="1"/>
</dbReference>
<dbReference type="PRINTS" id="PR00367">
    <property type="entry name" value="ETHRSPELEMNT"/>
</dbReference>
<dbReference type="SMART" id="SM00380">
    <property type="entry name" value="AP2"/>
    <property type="match status" value="1"/>
</dbReference>
<dbReference type="SUPFAM" id="SSF54171">
    <property type="entry name" value="DNA-binding domain"/>
    <property type="match status" value="1"/>
</dbReference>
<dbReference type="PROSITE" id="PS51032">
    <property type="entry name" value="AP2_ERF"/>
    <property type="match status" value="1"/>
</dbReference>
<reference key="1">
    <citation type="journal article" date="2007" name="Plant Cell">
        <title>AP2-ERF transcription factors mediate Nod factor dependent Mt ENOD11 activation in root hairs via a novel cis-regulatory motif.</title>
        <authorList>
            <person name="Andriankaja A."/>
            <person name="Boisson-Dernier A."/>
            <person name="Frances L."/>
            <person name="Sauviac L."/>
            <person name="Jauneau A."/>
            <person name="Barker D.G."/>
            <person name="de Carvalho-Niebel F."/>
        </authorList>
    </citation>
    <scope>NUCLEOTIDE SEQUENCE [MRNA]</scope>
    <scope>FUNCTION</scope>
    <scope>SUBCELLULAR LOCATION</scope>
    <scope>TISSUE SPECIFICITY</scope>
    <scope>INDUCTION BY NOD FACTORS</scope>
</reference>
<reference key="2">
    <citation type="journal article" date="2011" name="Nature">
        <title>The Medicago genome provides insight into the evolution of rhizobial symbioses.</title>
        <authorList>
            <person name="Young N.D."/>
            <person name="Debelle F."/>
            <person name="Oldroyd G.E.D."/>
            <person name="Geurts R."/>
            <person name="Cannon S.B."/>
            <person name="Udvardi M.K."/>
            <person name="Benedito V.A."/>
            <person name="Mayer K.F.X."/>
            <person name="Gouzy J."/>
            <person name="Schoof H."/>
            <person name="Van de Peer Y."/>
            <person name="Proost S."/>
            <person name="Cook D.R."/>
            <person name="Meyers B.C."/>
            <person name="Spannagl M."/>
            <person name="Cheung F."/>
            <person name="De Mita S."/>
            <person name="Krishnakumar V."/>
            <person name="Gundlach H."/>
            <person name="Zhou S."/>
            <person name="Mudge J."/>
            <person name="Bharti A.K."/>
            <person name="Murray J.D."/>
            <person name="Naoumkina M.A."/>
            <person name="Rosen B."/>
            <person name="Silverstein K.A.T."/>
            <person name="Tang H."/>
            <person name="Rombauts S."/>
            <person name="Zhao P.X."/>
            <person name="Zhou P."/>
            <person name="Barbe V."/>
            <person name="Bardou P."/>
            <person name="Bechner M."/>
            <person name="Bellec A."/>
            <person name="Berger A."/>
            <person name="Berges H."/>
            <person name="Bidwell S."/>
            <person name="Bisseling T."/>
            <person name="Choisne N."/>
            <person name="Couloux A."/>
            <person name="Denny R."/>
            <person name="Deshpande S."/>
            <person name="Dai X."/>
            <person name="Doyle J.J."/>
            <person name="Dudez A.-M."/>
            <person name="Farmer A.D."/>
            <person name="Fouteau S."/>
            <person name="Franken C."/>
            <person name="Gibelin C."/>
            <person name="Gish J."/>
            <person name="Goldstein S."/>
            <person name="Gonzalez A.J."/>
            <person name="Green P.J."/>
            <person name="Hallab A."/>
            <person name="Hartog M."/>
            <person name="Hua A."/>
            <person name="Humphray S.J."/>
            <person name="Jeong D.-H."/>
            <person name="Jing Y."/>
            <person name="Jocker A."/>
            <person name="Kenton S.M."/>
            <person name="Kim D.-J."/>
            <person name="Klee K."/>
            <person name="Lai H."/>
            <person name="Lang C."/>
            <person name="Lin S."/>
            <person name="Macmil S.L."/>
            <person name="Magdelenat G."/>
            <person name="Matthews L."/>
            <person name="McCorrison J."/>
            <person name="Monaghan E.L."/>
            <person name="Mun J.-H."/>
            <person name="Najar F.Z."/>
            <person name="Nicholson C."/>
            <person name="Noirot C."/>
            <person name="O'Bleness M."/>
            <person name="Paule C.R."/>
            <person name="Poulain J."/>
            <person name="Prion F."/>
            <person name="Qin B."/>
            <person name="Qu C."/>
            <person name="Retzel E.F."/>
            <person name="Riddle C."/>
            <person name="Sallet E."/>
            <person name="Samain S."/>
            <person name="Samson N."/>
            <person name="Sanders I."/>
            <person name="Saurat O."/>
            <person name="Scarpelli C."/>
            <person name="Schiex T."/>
            <person name="Segurens B."/>
            <person name="Severin A.J."/>
            <person name="Sherrier D.J."/>
            <person name="Shi R."/>
            <person name="Sims S."/>
            <person name="Singer S.R."/>
            <person name="Sinharoy S."/>
            <person name="Sterck L."/>
            <person name="Viollet A."/>
            <person name="Wang B.-B."/>
            <person name="Wang K."/>
            <person name="Wang M."/>
            <person name="Wang X."/>
            <person name="Warfsmann J."/>
            <person name="Weissenbach J."/>
            <person name="White D.D."/>
            <person name="White J.D."/>
            <person name="Wiley G.B."/>
            <person name="Wincker P."/>
            <person name="Xing Y."/>
            <person name="Yang L."/>
            <person name="Yao Z."/>
            <person name="Ying F."/>
            <person name="Zhai J."/>
            <person name="Zhou L."/>
            <person name="Zuber A."/>
            <person name="Denarie J."/>
            <person name="Dixon R.A."/>
            <person name="May G.D."/>
            <person name="Schwartz D.C."/>
            <person name="Rogers J."/>
            <person name="Quetier F."/>
            <person name="Town C.D."/>
            <person name="Roe B.A."/>
        </authorList>
    </citation>
    <scope>NUCLEOTIDE SEQUENCE [LARGE SCALE GENOMIC DNA]</scope>
    <source>
        <strain>cv. Jemalong A17</strain>
    </source>
</reference>
<reference key="3">
    <citation type="journal article" date="2014" name="BMC Genomics">
        <title>An improved genome release (version Mt4.0) for the model legume Medicago truncatula.</title>
        <authorList>
            <person name="Tang H."/>
            <person name="Krishnakumar V."/>
            <person name="Bidwell S."/>
            <person name="Rosen B."/>
            <person name="Chan A."/>
            <person name="Zhou S."/>
            <person name="Gentzbittel L."/>
            <person name="Childs K.L."/>
            <person name="Yandell M."/>
            <person name="Gundlach H."/>
            <person name="Mayer K.F."/>
            <person name="Schwartz D.C."/>
            <person name="Town C.D."/>
        </authorList>
    </citation>
    <scope>GENOME REANNOTATION</scope>
    <source>
        <strain>cv. Jemalong A17</strain>
    </source>
</reference>
<protein>
    <recommendedName>
        <fullName evidence="4">Ethylene-responsive transcription factor ERN3</fullName>
        <shortName evidence="4">ERF transcription factor ERN3</shortName>
    </recommendedName>
    <alternativeName>
        <fullName evidence="3">NF box-binding protein 3</fullName>
    </alternativeName>
    <alternativeName>
        <fullName evidence="3">Protein ERF REQUIRED FOR NODULATION 3</fullName>
    </alternativeName>
</protein>
<keyword id="KW-0238">DNA-binding</keyword>
<keyword id="KW-0536">Nodulation</keyword>
<keyword id="KW-0539">Nucleus</keyword>
<keyword id="KW-1185">Reference proteome</keyword>
<keyword id="KW-0804">Transcription</keyword>
<keyword id="KW-0805">Transcription regulation</keyword>
<name>ERN3_MEDTR</name>
<sequence length="238" mass="27199">MDYQNQKSNENKHGEKLMMKNRSKFVGVRQRASGKWAAEIKDTSKNIRMWLGTYKTAEEAARAYDEAAFLLRGTNTRTNFSTTHSIPTNSPISLKLKNLLHRKSISNLSQSKNQCTLMSSSLQGAPIDNSIMVMENENKSSCSSEESKSLFWVQNQLVSEYNPYGVDMNMMNCSIGITPNTLQIDYSWPLPQQRINELPTLNDSVNVYGMNECYVEGTYESKYEYDVNYPLSHLFCFT</sequence>
<accession>A9Y0K9</accession>
<comment type="function">
    <text evidence="2">Transcription factor involved in symbiotic nodule signaling in response to rhizobial Nod factors (NFs). Binds to the GCC box (NF-responsive box) of ENOD11 promoter. May act as transcriptional repressor of NF-responsive box-containing target gene promoters in root hairs.</text>
</comment>
<comment type="subcellular location">
    <subcellularLocation>
        <location evidence="1 2">Nucleus</location>
    </subcellularLocation>
</comment>
<comment type="tissue specificity">
    <text evidence="2">Expressed in roots, root hairs and leaves.</text>
</comment>
<comment type="induction">
    <text evidence="2">Induced by Nod factors in root hairs.</text>
</comment>
<comment type="similarity">
    <text evidence="4">Belongs to the AP2/ERF transcription factor family. ERF subfamily.</text>
</comment>
<feature type="chain" id="PRO_0000444709" description="Ethylene-responsive transcription factor ERN3">
    <location>
        <begin position="1"/>
        <end position="238"/>
    </location>
</feature>
<feature type="DNA-binding region" description="AP2/ERF" evidence="1">
    <location>
        <begin position="24"/>
        <end position="81"/>
    </location>
</feature>
<evidence type="ECO:0000255" key="1">
    <source>
        <dbReference type="PROSITE-ProRule" id="PRU00366"/>
    </source>
</evidence>
<evidence type="ECO:0000269" key="2">
    <source>
    </source>
</evidence>
<evidence type="ECO:0000303" key="3">
    <source>
    </source>
</evidence>
<evidence type="ECO:0000305" key="4"/>
<evidence type="ECO:0000312" key="5">
    <source>
        <dbReference type="EMBL" id="AET04210.1"/>
    </source>
</evidence>
<organism>
    <name type="scientific">Medicago truncatula</name>
    <name type="common">Barrel medic</name>
    <name type="synonym">Medicago tribuloides</name>
    <dbReference type="NCBI Taxonomy" id="3880"/>
    <lineage>
        <taxon>Eukaryota</taxon>
        <taxon>Viridiplantae</taxon>
        <taxon>Streptophyta</taxon>
        <taxon>Embryophyta</taxon>
        <taxon>Tracheophyta</taxon>
        <taxon>Spermatophyta</taxon>
        <taxon>Magnoliopsida</taxon>
        <taxon>eudicotyledons</taxon>
        <taxon>Gunneridae</taxon>
        <taxon>Pentapetalae</taxon>
        <taxon>rosids</taxon>
        <taxon>fabids</taxon>
        <taxon>Fabales</taxon>
        <taxon>Fabaceae</taxon>
        <taxon>Papilionoideae</taxon>
        <taxon>50 kb inversion clade</taxon>
        <taxon>NPAAA clade</taxon>
        <taxon>Hologalegina</taxon>
        <taxon>IRL clade</taxon>
        <taxon>Trifolieae</taxon>
        <taxon>Medicago</taxon>
    </lineage>
</organism>
<proteinExistence type="evidence at transcript level"/>